<gene>
    <name evidence="5" type="ordered locus">Oant_0439</name>
</gene>
<comment type="function">
    <text evidence="2 4">Catalyzes the epimerization of trans-4-hydroxy-L-proline (t4LHyp) to cis-4-hydroxy-D-proline (c4DHyp) in vitro, albeit with low efficiency. The physiological substrate may be different. Displays no proline racemase activity.</text>
</comment>
<comment type="catalytic activity">
    <reaction evidence="2">
        <text>trans-4-hydroxy-L-proline = cis-4-hydroxy-D-proline</text>
        <dbReference type="Rhea" id="RHEA:21152"/>
        <dbReference type="ChEBI" id="CHEBI:57690"/>
        <dbReference type="ChEBI" id="CHEBI:58375"/>
        <dbReference type="EC" id="5.1.1.8"/>
    </reaction>
</comment>
<comment type="biophysicochemical properties">
    <kinetics>
        <KM evidence="2">1.3 mM for trans-4-hydroxy-L-proline</KM>
        <text evidence="2">kcat is 0.064 sec(-1) for t4LHyp epimerization.</text>
    </kinetics>
</comment>
<comment type="similarity">
    <text evidence="4">Belongs to the proline racemase family.</text>
</comment>
<dbReference type="EC" id="5.1.1.8" evidence="2"/>
<dbReference type="EMBL" id="CP000758">
    <property type="protein sequence ID" value="ABS13170.1"/>
    <property type="molecule type" value="Genomic_DNA"/>
</dbReference>
<dbReference type="RefSeq" id="WP_012090731.1">
    <property type="nucleotide sequence ID" value="NC_009667.1"/>
</dbReference>
<dbReference type="PDB" id="4K8L">
    <property type="method" value="X-ray"/>
    <property type="resolution" value="1.90 A"/>
    <property type="chains" value="A=1-343"/>
</dbReference>
<dbReference type="PDBsum" id="4K8L"/>
<dbReference type="SMR" id="A6WW16"/>
<dbReference type="STRING" id="439375.Oant_0439"/>
<dbReference type="KEGG" id="oan:Oant_0439"/>
<dbReference type="PATRIC" id="fig|439375.7.peg.468"/>
<dbReference type="eggNOG" id="COG3938">
    <property type="taxonomic scope" value="Bacteria"/>
</dbReference>
<dbReference type="HOGENOM" id="CLU_036729_2_0_5"/>
<dbReference type="PhylomeDB" id="A6WW16"/>
<dbReference type="SABIO-RK" id="A6WW16"/>
<dbReference type="EvolutionaryTrace" id="A6WW16"/>
<dbReference type="Proteomes" id="UP000002301">
    <property type="component" value="Chromosome 1"/>
</dbReference>
<dbReference type="GO" id="GO:0047580">
    <property type="term" value="F:4-hydroxyproline epimerase activity"/>
    <property type="evidence" value="ECO:0007669"/>
    <property type="project" value="UniProtKB-EC"/>
</dbReference>
<dbReference type="GO" id="GO:0050346">
    <property type="term" value="F:trans-L-3-hydroxyproline dehydratase activity"/>
    <property type="evidence" value="ECO:0007669"/>
    <property type="project" value="UniProtKB-ARBA"/>
</dbReference>
<dbReference type="FunFam" id="3.10.310.10:FF:000010">
    <property type="entry name" value="Proline racemase"/>
    <property type="match status" value="1"/>
</dbReference>
<dbReference type="Gene3D" id="3.10.310.10">
    <property type="entry name" value="Diaminopimelate Epimerase, Chain A, domain 1"/>
    <property type="match status" value="2"/>
</dbReference>
<dbReference type="InterPro" id="IPR008794">
    <property type="entry name" value="Pro_racemase_fam"/>
</dbReference>
<dbReference type="NCBIfam" id="NF047722">
    <property type="entry name" value="T3LHypDht"/>
    <property type="match status" value="1"/>
</dbReference>
<dbReference type="PANTHER" id="PTHR33442:SF5">
    <property type="entry name" value="BIFUNCTIONAL TRANS-3-HYDROXY-L-PROLINE DEHYDRATASE_2-EPIMERASE"/>
    <property type="match status" value="1"/>
</dbReference>
<dbReference type="PANTHER" id="PTHR33442">
    <property type="entry name" value="TRANS-3-HYDROXY-L-PROLINE DEHYDRATASE"/>
    <property type="match status" value="1"/>
</dbReference>
<dbReference type="Pfam" id="PF05544">
    <property type="entry name" value="Pro_racemase"/>
    <property type="match status" value="1"/>
</dbReference>
<dbReference type="PIRSF" id="PIRSF029792">
    <property type="entry name" value="Pro_racemase"/>
    <property type="match status" value="1"/>
</dbReference>
<dbReference type="SFLD" id="SFLDS00028">
    <property type="entry name" value="Proline_Racemase"/>
    <property type="match status" value="1"/>
</dbReference>
<dbReference type="SUPFAM" id="SSF54506">
    <property type="entry name" value="Diaminopimelate epimerase-like"/>
    <property type="match status" value="1"/>
</dbReference>
<proteinExistence type="evidence at protein level"/>
<organism>
    <name type="scientific">Brucella anthropi (strain ATCC 49188 / DSM 6882 / CCUG 24695 / JCM 21032 / LMG 3331 / NBRC 15819 / NCTC 12168 / Alc 37)</name>
    <name type="common">Ochrobactrum anthropi</name>
    <dbReference type="NCBI Taxonomy" id="439375"/>
    <lineage>
        <taxon>Bacteria</taxon>
        <taxon>Pseudomonadati</taxon>
        <taxon>Pseudomonadota</taxon>
        <taxon>Alphaproteobacteria</taxon>
        <taxon>Hyphomicrobiales</taxon>
        <taxon>Brucellaceae</taxon>
        <taxon>Brucella/Ochrobactrum group</taxon>
        <taxon>Brucella</taxon>
    </lineage>
</organism>
<evidence type="ECO:0000250" key="1">
    <source>
        <dbReference type="UniProtKB" id="B9K4G4"/>
    </source>
</evidence>
<evidence type="ECO:0000269" key="2">
    <source>
    </source>
</evidence>
<evidence type="ECO:0000303" key="3">
    <source>
    </source>
</evidence>
<evidence type="ECO:0000305" key="4"/>
<evidence type="ECO:0000312" key="5">
    <source>
        <dbReference type="EMBL" id="ABS13170.1"/>
    </source>
</evidence>
<evidence type="ECO:0007829" key="6">
    <source>
        <dbReference type="PDB" id="4K8L"/>
    </source>
</evidence>
<keyword id="KW-0002">3D-structure</keyword>
<keyword id="KW-0413">Isomerase</keyword>
<keyword id="KW-1185">Reference proteome</keyword>
<protein>
    <recommendedName>
        <fullName evidence="3">4-hydroxyproline 2-epimerase 1</fullName>
        <shortName>4Hyp 2-epimerase 1</shortName>
        <shortName evidence="3">4HypE 1</shortName>
        <ecNumber evidence="2">5.1.1.8</ecNumber>
    </recommendedName>
</protein>
<reference key="1">
    <citation type="journal article" date="2011" name="J. Bacteriol.">
        <title>Genome of Ochrobactrum anthropi ATCC 49188 T, a versatile opportunistic pathogen and symbiont of several eukaryotic hosts.</title>
        <authorList>
            <person name="Chain P.S."/>
            <person name="Lang D.M."/>
            <person name="Comerci D.J."/>
            <person name="Malfatti S.A."/>
            <person name="Vergez L.M."/>
            <person name="Shin M."/>
            <person name="Ugalde R.A."/>
            <person name="Garcia E."/>
            <person name="Tolmasky M.E."/>
        </authorList>
    </citation>
    <scope>NUCLEOTIDE SEQUENCE [LARGE SCALE GENOMIC DNA]</scope>
    <source>
        <strain>ATCC 49188 / DSM 6882 / CCUG 24695 / JCM 21032 / LMG 3331 / NBRC 15819 / NCTC 12168 / Alc 37</strain>
    </source>
</reference>
<reference key="2">
    <citation type="journal article" date="2014" name="Elife">
        <title>Prediction and characterization of enzymatic activities guided by sequence similarity and genome neighborhood networks.</title>
        <authorList>
            <person name="Zhao S."/>
            <person name="Sakai A."/>
            <person name="Zhang X."/>
            <person name="Vetting M.W."/>
            <person name="Kumar R."/>
            <person name="Hillerich B."/>
            <person name="San Francisco B."/>
            <person name="Solbiati J."/>
            <person name="Steves A."/>
            <person name="Brown S."/>
            <person name="Akiva E."/>
            <person name="Barber A."/>
            <person name="Seidel R.D."/>
            <person name="Babbitt P.C."/>
            <person name="Almo S.C."/>
            <person name="Gerlt J.A."/>
            <person name="Jacobson M.P."/>
        </authorList>
    </citation>
    <scope>X-RAY CRYSTALLOGRAPHY (1.90 ANGSTROMS)</scope>
    <scope>FUNCTION</scope>
    <scope>CATALYTIC ACTIVITY</scope>
    <scope>BIOPHYSICOCHEMICAL PROPERTIES</scope>
</reference>
<name>4HPE1_BRUA4</name>
<feature type="chain" id="PRO_0000432248" description="4-hydroxyproline 2-epimerase 1">
    <location>
        <begin position="1"/>
        <end position="343"/>
    </location>
</feature>
<feature type="active site" description="Proton acceptor" evidence="1">
    <location>
        <position position="90"/>
    </location>
</feature>
<feature type="binding site" evidence="1">
    <location>
        <begin position="91"/>
        <end position="92"/>
    </location>
    <ligand>
        <name>substrate</name>
    </ligand>
</feature>
<feature type="binding site" evidence="1">
    <location>
        <position position="251"/>
    </location>
    <ligand>
        <name>substrate</name>
    </ligand>
</feature>
<feature type="binding site" evidence="1">
    <location>
        <begin position="256"/>
        <end position="257"/>
    </location>
    <ligand>
        <name>substrate</name>
    </ligand>
</feature>
<feature type="strand" evidence="6">
    <location>
        <begin position="6"/>
        <end position="14"/>
    </location>
</feature>
<feature type="strand" evidence="6">
    <location>
        <begin position="20"/>
        <end position="25"/>
    </location>
</feature>
<feature type="helix" evidence="6">
    <location>
        <begin position="34"/>
        <end position="44"/>
    </location>
</feature>
<feature type="helix" evidence="6">
    <location>
        <begin position="46"/>
        <end position="52"/>
    </location>
</feature>
<feature type="strand" evidence="6">
    <location>
        <begin position="63"/>
        <end position="67"/>
    </location>
</feature>
<feature type="strand" evidence="6">
    <location>
        <begin position="75"/>
        <end position="81"/>
    </location>
</feature>
<feature type="helix" evidence="6">
    <location>
        <begin position="91"/>
        <end position="103"/>
    </location>
</feature>
<feature type="strand" evidence="6">
    <location>
        <begin position="111"/>
        <end position="120"/>
    </location>
</feature>
<feature type="strand" evidence="6">
    <location>
        <begin position="123"/>
        <end position="132"/>
    </location>
</feature>
<feature type="strand" evidence="6">
    <location>
        <begin position="135"/>
        <end position="142"/>
    </location>
</feature>
<feature type="strand" evidence="6">
    <location>
        <begin position="146"/>
        <end position="156"/>
    </location>
</feature>
<feature type="strand" evidence="6">
    <location>
        <begin position="162"/>
        <end position="179"/>
    </location>
</feature>
<feature type="turn" evidence="6">
    <location>
        <begin position="180"/>
        <end position="182"/>
    </location>
</feature>
<feature type="helix" evidence="6">
    <location>
        <begin position="194"/>
        <end position="208"/>
    </location>
</feature>
<feature type="strand" evidence="6">
    <location>
        <begin position="214"/>
        <end position="216"/>
    </location>
</feature>
<feature type="strand" evidence="6">
    <location>
        <begin position="223"/>
        <end position="227"/>
    </location>
</feature>
<feature type="strand" evidence="6">
    <location>
        <begin position="231"/>
        <end position="233"/>
    </location>
</feature>
<feature type="strand" evidence="6">
    <location>
        <begin position="236"/>
        <end position="238"/>
    </location>
</feature>
<feature type="strand" evidence="6">
    <location>
        <begin position="241"/>
        <end position="244"/>
    </location>
</feature>
<feature type="helix" evidence="6">
    <location>
        <begin position="256"/>
        <end position="268"/>
    </location>
</feature>
<feature type="strand" evidence="6">
    <location>
        <begin position="277"/>
        <end position="279"/>
    </location>
</feature>
<feature type="strand" evidence="6">
    <location>
        <begin position="290"/>
        <end position="298"/>
    </location>
</feature>
<feature type="strand" evidence="6">
    <location>
        <begin position="301"/>
        <end position="310"/>
    </location>
</feature>
<feature type="strand" evidence="6">
    <location>
        <begin position="312"/>
        <end position="321"/>
    </location>
</feature>
<accession>A6WW16</accession>
<sequence>MRSTKVIHIVGCHAEGEVGDVIVGGVAPPPGKTVWEQSRFIASDETLRNFVLNEPRGGVFRHVNLLVPPKDPRAQMGFIIMEPADTPPMSGSNSICVSTVLLDSGIIPMQEPVTRMVLEAPGGLIEVEAECRNGKAERISVRNVPSFADRLNASLEVEGLGTITVDTAYGGDSFVIVDAASIGMKIEPGQARELAEIGVKITKAANEQLGFRHPEKDWNHISFCQITEPVTRDGDILTGVNTVAIRPAKLDRSPTGTGCSARMAVLHAKGQMKVGERFIGKSVLGTEFHCRLDKTLELGGKPAISPIISGRAWVTGTSQLMLDPSDPFPSGYRLSDTWPNMPE</sequence>